<comment type="function">
    <text evidence="2">Serine/threonine-protein kinase that is required for the mitogen or stress-induced phosphorylation of the transcription factors CREB1 and ATF1 and for the regulation of the transcription factors RELA, STAT3 and ETV1/ER81, and that contributes to gene activation by histone phosphorylation and functions in the regulation of inflammatory genes. Phosphorylates CREB1 and ATF1 in response to mitogenic or stress stimuli such as UV-C irradiation, epidermal growth factor (EGF) and anisomycin. Plays an essential role in the control of RELA transcriptional activity in response to TNF and upon glucocorticoid, associates in the cytoplasm with the glucocorticoid receptor NR3C1 and contributes to RELA inhibition and repression of inflammatory gene expression. In skeletal myoblasts is required for phosphorylation of RELA at 'Ser-276' during oxidative stress. In erythropoietin-stimulated cells, is necessary for the 'Ser-727' phosphorylation of STAT3 and regulation of its transcriptional potential. Phosphorylates ETV1/ER81 at 'Ser-191' and 'Ser-216', and thereby regulates its ability to stimulate transcription, which may be important during development and breast tumor formation. Directly represses transcription via phosphorylation of 'Ser-1' of histone H2A. Phosphorylates 'Ser-10' of histone H3 in response to mitogenics, stress stimuli and EGF, which results in the transcriptional activation of several immediate early genes, including proto-oncogenes c-fos/FOS and c-jun/JUN. May also phosphorylate 'Ser-28' of histone H3. Mediates the mitogen- and stress-induced phosphorylation of high mobility group protein 1 (HMGN1/HMG14). In lipopolysaccharide-stimulated primary macrophages, acts downstream of the Toll-like receptor TLR4 to limit the production of pro-inflammatory cytokines. Functions probably by inducing transcription of the MAP kinase phosphatase DUSP1 and the anti-inflammatory cytokine interleukin 10 (IL10), via CREB1 and ATF1 transcription factors. Plays a role in neuronal cell death by mediating the downstream effects of excitotoxic injury (By similarity). Phosphorylates TRIM7 at 'Ser-107' in response to growth factor signaling via the MEK/ERK pathway, thereby stimulating its ubiquitin ligase activity (By similarity).</text>
</comment>
<comment type="catalytic activity">
    <reaction>
        <text>L-seryl-[protein] + ATP = O-phospho-L-seryl-[protein] + ADP + H(+)</text>
        <dbReference type="Rhea" id="RHEA:17989"/>
        <dbReference type="Rhea" id="RHEA-COMP:9863"/>
        <dbReference type="Rhea" id="RHEA-COMP:11604"/>
        <dbReference type="ChEBI" id="CHEBI:15378"/>
        <dbReference type="ChEBI" id="CHEBI:29999"/>
        <dbReference type="ChEBI" id="CHEBI:30616"/>
        <dbReference type="ChEBI" id="CHEBI:83421"/>
        <dbReference type="ChEBI" id="CHEBI:456216"/>
        <dbReference type="EC" id="2.7.11.1"/>
    </reaction>
</comment>
<comment type="catalytic activity">
    <reaction>
        <text>L-threonyl-[protein] + ATP = O-phospho-L-threonyl-[protein] + ADP + H(+)</text>
        <dbReference type="Rhea" id="RHEA:46608"/>
        <dbReference type="Rhea" id="RHEA-COMP:11060"/>
        <dbReference type="Rhea" id="RHEA-COMP:11605"/>
        <dbReference type="ChEBI" id="CHEBI:15378"/>
        <dbReference type="ChEBI" id="CHEBI:30013"/>
        <dbReference type="ChEBI" id="CHEBI:30616"/>
        <dbReference type="ChEBI" id="CHEBI:61977"/>
        <dbReference type="ChEBI" id="CHEBI:456216"/>
        <dbReference type="EC" id="2.7.11.1"/>
    </reaction>
</comment>
<comment type="cofactor">
    <cofactor evidence="1">
        <name>Mg(2+)</name>
        <dbReference type="ChEBI" id="CHEBI:18420"/>
    </cofactor>
</comment>
<comment type="activity regulation">
    <text evidence="1">Activated by phosphorylation at Ser-360, Thr-581 and Thr-700 by MAPK1/ERK2, MAPK3/ERK1 and MAPK14/p38-alpha, and by further autophosphorylation of Ser-212, Ser-376 and Ser-381 by the activated C-terminal kinase domain. The active N-terminal kinase domain finally phosphorylates downstream substrates, as well as Ser-750, Ser-752 and Ser-758 in its own C-terminal region (By similarity).</text>
</comment>
<comment type="subunit">
    <text evidence="1">Forms a complex with either MAPK1/ERK2 or MAPK3/ERK1 in quiescent cells which transiently dissociates following mitogenic stimulation. Also associates with MAPK14/p38-alpha. Activated RPS6KA5 associates with and phosphorylates the NF-kappa-B p65 subunit RELA. Interacts with CREBBP and EP300 (By similarity).</text>
</comment>
<comment type="subcellular location">
    <subcellularLocation>
        <location evidence="1">Nucleus</location>
    </subcellularLocation>
</comment>
<comment type="domain">
    <text evidence="1">Enzyme activity requires the presence of both kinase domains.</text>
</comment>
<comment type="PTM">
    <text evidence="1">Ser-376 and Thr-581 phosphorylation is required for kinase activity. Ser-376 and Ser-212 are autophosphorylated by the C-terminal kinase domain, and their phosphorylation is essential for the catalytic activity of the N-terminal kinase domain. Phosphorylated at Ser-360, Thr-581 and Thr-700 by MAPK1/ERK2, MAPK3/ERK1 and MAPK14/p38-alpha. Autophosphorylated at Ser-750, Ser-752 and Ser-758 by the N-terminal kinase domain (By similarity).</text>
</comment>
<comment type="PTM">
    <text evidence="1">Ubiquitinated.</text>
</comment>
<comment type="miscellaneous">
    <text evidence="1">Enzyme activity requires the presence of both kinase domains.</text>
</comment>
<comment type="similarity">
    <text evidence="7">Belongs to the protein kinase superfamily. AGC Ser/Thr protein kinase family. S6 kinase subfamily.</text>
</comment>
<name>KS6A5_PONAB</name>
<proteinExistence type="evidence at transcript level"/>
<feature type="chain" id="PRO_0000232733" description="Ribosomal protein S6 kinase alpha-5">
    <location>
        <begin position="1"/>
        <end position="802"/>
    </location>
</feature>
<feature type="domain" description="Protein kinase 1" evidence="4">
    <location>
        <begin position="49"/>
        <end position="318"/>
    </location>
</feature>
<feature type="domain" description="AGC-kinase C-terminal" evidence="5">
    <location>
        <begin position="319"/>
        <end position="387"/>
    </location>
</feature>
<feature type="domain" description="Protein kinase 2" evidence="4">
    <location>
        <begin position="426"/>
        <end position="687"/>
    </location>
</feature>
<feature type="region of interest" description="Disordered" evidence="6">
    <location>
        <begin position="1"/>
        <end position="23"/>
    </location>
</feature>
<feature type="region of interest" description="Disordered" evidence="6">
    <location>
        <begin position="741"/>
        <end position="802"/>
    </location>
</feature>
<feature type="compositionally biased region" description="Gly residues" evidence="6">
    <location>
        <begin position="1"/>
        <end position="22"/>
    </location>
</feature>
<feature type="compositionally biased region" description="Low complexity" evidence="6">
    <location>
        <begin position="749"/>
        <end position="779"/>
    </location>
</feature>
<feature type="compositionally biased region" description="Polar residues" evidence="6">
    <location>
        <begin position="780"/>
        <end position="802"/>
    </location>
</feature>
<feature type="active site" description="Proton acceptor" evidence="1">
    <location>
        <position position="177"/>
    </location>
</feature>
<feature type="active site" description="Proton acceptor" evidence="1">
    <location>
        <position position="544"/>
    </location>
</feature>
<feature type="binding site" evidence="4">
    <location>
        <begin position="55"/>
        <end position="63"/>
    </location>
    <ligand>
        <name>ATP</name>
        <dbReference type="ChEBI" id="CHEBI:30616"/>
    </ligand>
</feature>
<feature type="binding site" evidence="4">
    <location>
        <position position="81"/>
    </location>
    <ligand>
        <name>ATP</name>
        <dbReference type="ChEBI" id="CHEBI:30616"/>
    </ligand>
</feature>
<feature type="binding site" evidence="4">
    <location>
        <begin position="432"/>
        <end position="440"/>
    </location>
    <ligand>
        <name>ATP</name>
        <dbReference type="ChEBI" id="CHEBI:30616"/>
    </ligand>
</feature>
<feature type="binding site" evidence="4">
    <location>
        <position position="455"/>
    </location>
    <ligand>
        <name>ATP</name>
        <dbReference type="ChEBI" id="CHEBI:30616"/>
    </ligand>
</feature>
<feature type="modified residue" description="Phosphoserine; by autocatalysis" evidence="2">
    <location>
        <position position="212"/>
    </location>
</feature>
<feature type="modified residue" description="Phosphoserine; by MAPK1, MAPK3 and MAPK14" evidence="2">
    <location>
        <position position="360"/>
    </location>
</feature>
<feature type="modified residue" description="Phosphoserine; by autocatalysis" evidence="2">
    <location>
        <position position="376"/>
    </location>
</feature>
<feature type="modified residue" description="Phosphoserine; by autocatalysis" evidence="2">
    <location>
        <position position="381"/>
    </location>
</feature>
<feature type="modified residue" description="Phosphothreonine; by MAPK1, MAPK3 and MAPK14" evidence="2">
    <location>
        <position position="581"/>
    </location>
</feature>
<feature type="modified residue" description="Phosphoserine" evidence="2">
    <location>
        <position position="647"/>
    </location>
</feature>
<feature type="modified residue" description="Phosphoserine" evidence="2">
    <location>
        <position position="657"/>
    </location>
</feature>
<feature type="modified residue" description="Phosphoserine" evidence="3">
    <location>
        <position position="691"/>
    </location>
</feature>
<feature type="modified residue" description="Phosphoserine" evidence="2">
    <location>
        <position position="695"/>
    </location>
</feature>
<feature type="modified residue" description="Phosphothreonine; by MAPK1, MAPK3 and MAPK14" evidence="2">
    <location>
        <position position="700"/>
    </location>
</feature>
<feature type="modified residue" description="Phosphoserine; by autocatalysis" evidence="2">
    <location>
        <position position="750"/>
    </location>
</feature>
<feature type="modified residue" description="Phosphoserine; by autocatalysis" evidence="2">
    <location>
        <position position="752"/>
    </location>
</feature>
<feature type="modified residue" description="Phosphoserine; by autocatalysis" evidence="2">
    <location>
        <position position="758"/>
    </location>
</feature>
<feature type="modified residue" description="Phosphoserine" evidence="3">
    <location>
        <position position="798"/>
    </location>
</feature>
<gene>
    <name type="primary">RPS6KA5</name>
</gene>
<accession>Q5R4K3</accession>
<protein>
    <recommendedName>
        <fullName>Ribosomal protein S6 kinase alpha-5</fullName>
        <shortName>S6K-alpha-5</shortName>
        <ecNumber>2.7.11.1</ecNumber>
    </recommendedName>
</protein>
<reference key="1">
    <citation type="submission" date="2004-11" db="EMBL/GenBank/DDBJ databases">
        <authorList>
            <consortium name="The German cDNA consortium"/>
        </authorList>
    </citation>
    <scope>NUCLEOTIDE SEQUENCE [LARGE SCALE MRNA]</scope>
    <source>
        <tissue>Brain cortex</tissue>
    </source>
</reference>
<evidence type="ECO:0000250" key="1"/>
<evidence type="ECO:0000250" key="2">
    <source>
        <dbReference type="UniProtKB" id="O75582"/>
    </source>
</evidence>
<evidence type="ECO:0000250" key="3">
    <source>
        <dbReference type="UniProtKB" id="Q8C050"/>
    </source>
</evidence>
<evidence type="ECO:0000255" key="4">
    <source>
        <dbReference type="PROSITE-ProRule" id="PRU00159"/>
    </source>
</evidence>
<evidence type="ECO:0000255" key="5">
    <source>
        <dbReference type="PROSITE-ProRule" id="PRU00618"/>
    </source>
</evidence>
<evidence type="ECO:0000256" key="6">
    <source>
        <dbReference type="SAM" id="MobiDB-lite"/>
    </source>
</evidence>
<evidence type="ECO:0000305" key="7"/>
<sequence>MEEEGGSSGGAAGTSADGGDGGEQLLTVKHELRTANLTGHAERVGIENFELLKVLGTGAYGKVFLVRKISGHDTGKLYAMKVLKKATIVQKAKTTEHTRTERQVLEHTRQSPFLVTLHYAFQTETKLHLILDYINGGELFTHLSQRERFTEHEVQIYVGEIVLALEHLHKLGIIYRDIKLENILLDSNGHVMLTDFGLSKEFVADETERAYSFCGTIEYMAPDIVRGGDSGHDKAVDWWSLGVLMYELLTGASPFTVDGEKNSQAEISRRILKSEPPYPQEMSALAKDLIQHLLMKDPKKRLGCGPRDADEIKEHLFFQKINWDDLAAKKVPAPFKPVIRDELDVSNFAEEFTEMDPTYSPAALPQSSEKLFQGYSFVAPSILFKRNAAVIDPLQFHMEVERPGVTNVARSAMMKDSPFYQHYDLDLKDKPLGEGSFSICRKCVHKKSNQAFAVKIISKRMEANTQKEITALKLCEGHPNIVKLHEVFHDQLHTFLVMELLNGGELFERIKKKKHFSETEASYIMRKLVSAVSHMHDVGVVHRDLKPENLLFTDENDNLEIKIIDFGFARPKPPDNQPLKTPCFTLHYAAPELLNQNGYDESCDLWSLGVILYTMLSGQVPFQSHDRSLTCTSAVEIMKKIKKGDFSFEGEAWKNVSQEAKDLIQGLLTVDPNKRLKMSGLRYNEWLQDGSQLSSNPLMTPDILGSSGAAVHTCVKATFHAFNKYKREGFCLQNVDKAPLAKRRKMKKTSTSTETRSSSSESSHSSSSHSHGKTTPTKTLQPSNPADSNNPETLFQFSDSVA</sequence>
<organism>
    <name type="scientific">Pongo abelii</name>
    <name type="common">Sumatran orangutan</name>
    <name type="synonym">Pongo pygmaeus abelii</name>
    <dbReference type="NCBI Taxonomy" id="9601"/>
    <lineage>
        <taxon>Eukaryota</taxon>
        <taxon>Metazoa</taxon>
        <taxon>Chordata</taxon>
        <taxon>Craniata</taxon>
        <taxon>Vertebrata</taxon>
        <taxon>Euteleostomi</taxon>
        <taxon>Mammalia</taxon>
        <taxon>Eutheria</taxon>
        <taxon>Euarchontoglires</taxon>
        <taxon>Primates</taxon>
        <taxon>Haplorrhini</taxon>
        <taxon>Catarrhini</taxon>
        <taxon>Hominidae</taxon>
        <taxon>Pongo</taxon>
    </lineage>
</organism>
<keyword id="KW-0067">ATP-binding</keyword>
<keyword id="KW-0395">Inflammatory response</keyword>
<keyword id="KW-0418">Kinase</keyword>
<keyword id="KW-0460">Magnesium</keyword>
<keyword id="KW-0479">Metal-binding</keyword>
<keyword id="KW-0547">Nucleotide-binding</keyword>
<keyword id="KW-0539">Nucleus</keyword>
<keyword id="KW-0597">Phosphoprotein</keyword>
<keyword id="KW-1185">Reference proteome</keyword>
<keyword id="KW-0677">Repeat</keyword>
<keyword id="KW-0723">Serine/threonine-protein kinase</keyword>
<keyword id="KW-0346">Stress response</keyword>
<keyword id="KW-0808">Transferase</keyword>
<keyword id="KW-0832">Ubl conjugation</keyword>
<dbReference type="EC" id="2.7.11.1"/>
<dbReference type="EMBL" id="CR861243">
    <property type="protein sequence ID" value="CAH93313.1"/>
    <property type="molecule type" value="mRNA"/>
</dbReference>
<dbReference type="RefSeq" id="NP_001126949.1">
    <property type="nucleotide sequence ID" value="NM_001133477.1"/>
</dbReference>
<dbReference type="SMR" id="Q5R4K3"/>
<dbReference type="FunCoup" id="Q5R4K3">
    <property type="interactions" value="4427"/>
</dbReference>
<dbReference type="STRING" id="9601.ENSPPYP00000006894"/>
<dbReference type="GeneID" id="100173967"/>
<dbReference type="KEGG" id="pon:100173967"/>
<dbReference type="CTD" id="9252"/>
<dbReference type="eggNOG" id="KOG0603">
    <property type="taxonomic scope" value="Eukaryota"/>
</dbReference>
<dbReference type="InParanoid" id="Q5R4K3"/>
<dbReference type="OrthoDB" id="6764942at2759"/>
<dbReference type="Proteomes" id="UP000001595">
    <property type="component" value="Unplaced"/>
</dbReference>
<dbReference type="GO" id="GO:0005737">
    <property type="term" value="C:cytoplasm"/>
    <property type="evidence" value="ECO:0000250"/>
    <property type="project" value="UniProtKB"/>
</dbReference>
<dbReference type="GO" id="GO:0005634">
    <property type="term" value="C:nucleus"/>
    <property type="evidence" value="ECO:0000250"/>
    <property type="project" value="UniProtKB"/>
</dbReference>
<dbReference type="GO" id="GO:0005524">
    <property type="term" value="F:ATP binding"/>
    <property type="evidence" value="ECO:0007669"/>
    <property type="project" value="UniProtKB-KW"/>
</dbReference>
<dbReference type="GO" id="GO:0044024">
    <property type="term" value="F:histone H2AS1 kinase activity"/>
    <property type="evidence" value="ECO:0000250"/>
    <property type="project" value="UniProtKB"/>
</dbReference>
<dbReference type="GO" id="GO:0000287">
    <property type="term" value="F:magnesium ion binding"/>
    <property type="evidence" value="ECO:0007669"/>
    <property type="project" value="InterPro"/>
</dbReference>
<dbReference type="GO" id="GO:0106310">
    <property type="term" value="F:protein serine kinase activity"/>
    <property type="evidence" value="ECO:0007669"/>
    <property type="project" value="RHEA"/>
</dbReference>
<dbReference type="GO" id="GO:0006954">
    <property type="term" value="P:inflammatory response"/>
    <property type="evidence" value="ECO:0007669"/>
    <property type="project" value="UniProtKB-KW"/>
</dbReference>
<dbReference type="GO" id="GO:0035556">
    <property type="term" value="P:intracellular signal transduction"/>
    <property type="evidence" value="ECO:0007669"/>
    <property type="project" value="InterPro"/>
</dbReference>
<dbReference type="GO" id="GO:0045892">
    <property type="term" value="P:negative regulation of DNA-templated transcription"/>
    <property type="evidence" value="ECO:0000250"/>
    <property type="project" value="UniProtKB"/>
</dbReference>
<dbReference type="GO" id="GO:0051092">
    <property type="term" value="P:positive regulation of NF-kappaB transcription factor activity"/>
    <property type="evidence" value="ECO:0000250"/>
    <property type="project" value="UniProtKB"/>
</dbReference>
<dbReference type="GO" id="GO:0043687">
    <property type="term" value="P:post-translational protein modification"/>
    <property type="evidence" value="ECO:0000250"/>
    <property type="project" value="UniProtKB"/>
</dbReference>
<dbReference type="GO" id="GO:0006355">
    <property type="term" value="P:regulation of DNA-templated transcription"/>
    <property type="evidence" value="ECO:0000250"/>
    <property type="project" value="UniProtKB"/>
</dbReference>
<dbReference type="CDD" id="cd14179">
    <property type="entry name" value="STKc_MSK1_C"/>
    <property type="match status" value="1"/>
</dbReference>
<dbReference type="CDD" id="cd05613">
    <property type="entry name" value="STKc_MSK1_N"/>
    <property type="match status" value="1"/>
</dbReference>
<dbReference type="FunFam" id="3.30.200.20:FF:000648">
    <property type="entry name" value="Non-specific serine/threonine protein kinase"/>
    <property type="match status" value="1"/>
</dbReference>
<dbReference type="FunFam" id="1.10.510.10:FF:000109">
    <property type="entry name" value="Ribosomal protein S6 kinase"/>
    <property type="match status" value="1"/>
</dbReference>
<dbReference type="FunFam" id="1.10.510.10:FF:000157">
    <property type="entry name" value="Ribosomal protein S6 kinase"/>
    <property type="match status" value="1"/>
</dbReference>
<dbReference type="FunFam" id="3.30.200.20:FF:000208">
    <property type="entry name" value="Ribosomal protein S6 kinase"/>
    <property type="match status" value="1"/>
</dbReference>
<dbReference type="FunFam" id="3.30.200.20:FF:000686">
    <property type="entry name" value="Ribosomal protein S6 kinase"/>
    <property type="match status" value="1"/>
</dbReference>
<dbReference type="Gene3D" id="3.30.200.20">
    <property type="entry name" value="Phosphorylase Kinase, domain 1"/>
    <property type="match status" value="2"/>
</dbReference>
<dbReference type="Gene3D" id="1.10.510.10">
    <property type="entry name" value="Transferase(Phosphotransferase) domain 1"/>
    <property type="match status" value="2"/>
</dbReference>
<dbReference type="InterPro" id="IPR000961">
    <property type="entry name" value="AGC-kinase_C"/>
</dbReference>
<dbReference type="InterPro" id="IPR011009">
    <property type="entry name" value="Kinase-like_dom_sf"/>
</dbReference>
<dbReference type="InterPro" id="IPR017892">
    <property type="entry name" value="Pkinase_C"/>
</dbReference>
<dbReference type="InterPro" id="IPR000719">
    <property type="entry name" value="Prot_kinase_dom"/>
</dbReference>
<dbReference type="InterPro" id="IPR017441">
    <property type="entry name" value="Protein_kinase_ATP_BS"/>
</dbReference>
<dbReference type="InterPro" id="IPR016239">
    <property type="entry name" value="Ribosomal_S6_kinase_II"/>
</dbReference>
<dbReference type="InterPro" id="IPR008271">
    <property type="entry name" value="Ser/Thr_kinase_AS"/>
</dbReference>
<dbReference type="PANTHER" id="PTHR24351">
    <property type="entry name" value="RIBOSOMAL PROTEIN S6 KINASE"/>
    <property type="match status" value="1"/>
</dbReference>
<dbReference type="Pfam" id="PF00069">
    <property type="entry name" value="Pkinase"/>
    <property type="match status" value="2"/>
</dbReference>
<dbReference type="Pfam" id="PF00433">
    <property type="entry name" value="Pkinase_C"/>
    <property type="match status" value="1"/>
</dbReference>
<dbReference type="PIRSF" id="PIRSF000606">
    <property type="entry name" value="Ribsml_S6_kin_2"/>
    <property type="match status" value="1"/>
</dbReference>
<dbReference type="SMART" id="SM00133">
    <property type="entry name" value="S_TK_X"/>
    <property type="match status" value="1"/>
</dbReference>
<dbReference type="SMART" id="SM00220">
    <property type="entry name" value="S_TKc"/>
    <property type="match status" value="2"/>
</dbReference>
<dbReference type="SUPFAM" id="SSF56112">
    <property type="entry name" value="Protein kinase-like (PK-like)"/>
    <property type="match status" value="2"/>
</dbReference>
<dbReference type="PROSITE" id="PS51285">
    <property type="entry name" value="AGC_KINASE_CTER"/>
    <property type="match status" value="1"/>
</dbReference>
<dbReference type="PROSITE" id="PS00107">
    <property type="entry name" value="PROTEIN_KINASE_ATP"/>
    <property type="match status" value="2"/>
</dbReference>
<dbReference type="PROSITE" id="PS50011">
    <property type="entry name" value="PROTEIN_KINASE_DOM"/>
    <property type="match status" value="2"/>
</dbReference>
<dbReference type="PROSITE" id="PS00108">
    <property type="entry name" value="PROTEIN_KINASE_ST"/>
    <property type="match status" value="2"/>
</dbReference>